<reference key="1">
    <citation type="journal article" date="2002" name="Nucleic Acids Res.">
        <title>Genome sequence of Shigella flexneri 2a: insights into pathogenicity through comparison with genomes of Escherichia coli K12 and O157.</title>
        <authorList>
            <person name="Jin Q."/>
            <person name="Yuan Z."/>
            <person name="Xu J."/>
            <person name="Wang Y."/>
            <person name="Shen Y."/>
            <person name="Lu W."/>
            <person name="Wang J."/>
            <person name="Liu H."/>
            <person name="Yang J."/>
            <person name="Yang F."/>
            <person name="Zhang X."/>
            <person name="Zhang J."/>
            <person name="Yang G."/>
            <person name="Wu H."/>
            <person name="Qu D."/>
            <person name="Dong J."/>
            <person name="Sun L."/>
            <person name="Xue Y."/>
            <person name="Zhao A."/>
            <person name="Gao Y."/>
            <person name="Zhu J."/>
            <person name="Kan B."/>
            <person name="Ding K."/>
            <person name="Chen S."/>
            <person name="Cheng H."/>
            <person name="Yao Z."/>
            <person name="He B."/>
            <person name="Chen R."/>
            <person name="Ma D."/>
            <person name="Qiang B."/>
            <person name="Wen Y."/>
            <person name="Hou Y."/>
            <person name="Yu J."/>
        </authorList>
    </citation>
    <scope>NUCLEOTIDE SEQUENCE [LARGE SCALE GENOMIC DNA]</scope>
    <source>
        <strain>301 / Serotype 2a</strain>
    </source>
</reference>
<reference key="2">
    <citation type="journal article" date="2003" name="Infect. Immun.">
        <title>Complete genome sequence and comparative genomics of Shigella flexneri serotype 2a strain 2457T.</title>
        <authorList>
            <person name="Wei J."/>
            <person name="Goldberg M.B."/>
            <person name="Burland V."/>
            <person name="Venkatesan M.M."/>
            <person name="Deng W."/>
            <person name="Fournier G."/>
            <person name="Mayhew G.F."/>
            <person name="Plunkett G. III"/>
            <person name="Rose D.J."/>
            <person name="Darling A."/>
            <person name="Mau B."/>
            <person name="Perna N.T."/>
            <person name="Payne S.M."/>
            <person name="Runyen-Janecky L.J."/>
            <person name="Zhou S."/>
            <person name="Schwartz D.C."/>
            <person name="Blattner F.R."/>
        </authorList>
    </citation>
    <scope>NUCLEOTIDE SEQUENCE [LARGE SCALE GENOMIC DNA]</scope>
    <source>
        <strain>ATCC 700930 / 2457T / Serotype 2a</strain>
    </source>
</reference>
<gene>
    <name evidence="1" type="primary">tusB</name>
    <name type="ordered locus">SF3361</name>
    <name type="ordered locus">S4401</name>
</gene>
<proteinExistence type="inferred from homology"/>
<organism>
    <name type="scientific">Shigella flexneri</name>
    <dbReference type="NCBI Taxonomy" id="623"/>
    <lineage>
        <taxon>Bacteria</taxon>
        <taxon>Pseudomonadati</taxon>
        <taxon>Pseudomonadota</taxon>
        <taxon>Gammaproteobacteria</taxon>
        <taxon>Enterobacterales</taxon>
        <taxon>Enterobacteriaceae</taxon>
        <taxon>Shigella</taxon>
    </lineage>
</organism>
<name>TUSB_SHIFL</name>
<comment type="function">
    <text evidence="1">Part of a sulfur-relay system required for 2-thiolation of 5-methylaminomethyl-2-thiouridine (mnm(5)s(2)U) at tRNA wobble positions.</text>
</comment>
<comment type="subunit">
    <text evidence="1">Heterohexamer, formed by a dimer of trimers. The hexameric TusBCD complex contains 2 copies each of TusB, TusC and TusD. The TusBCD complex interacts with TusE.</text>
</comment>
<comment type="subcellular location">
    <subcellularLocation>
        <location evidence="1">Cytoplasm</location>
    </subcellularLocation>
</comment>
<comment type="similarity">
    <text evidence="1">Belongs to the DsrH/TusB family.</text>
</comment>
<protein>
    <recommendedName>
        <fullName evidence="1">Protein TusB</fullName>
    </recommendedName>
    <alternativeName>
        <fullName evidence="1">tRNA 2-thiouridine synthesizing protein B</fullName>
    </alternativeName>
</protein>
<dbReference type="EMBL" id="AE005674">
    <property type="protein sequence ID" value="AAN44824.1"/>
    <property type="molecule type" value="Genomic_DNA"/>
</dbReference>
<dbReference type="EMBL" id="AE014073">
    <property type="protein sequence ID" value="AAP19353.1"/>
    <property type="molecule type" value="Genomic_DNA"/>
</dbReference>
<dbReference type="RefSeq" id="WP_000903372.1">
    <property type="nucleotide sequence ID" value="NZ_WPGW01000003.1"/>
</dbReference>
<dbReference type="SMR" id="Q83JC2"/>
<dbReference type="STRING" id="198214.SF3361"/>
<dbReference type="PaxDb" id="198214-SF3361"/>
<dbReference type="KEGG" id="sfl:SF3361"/>
<dbReference type="KEGG" id="sfx:S4401"/>
<dbReference type="PATRIC" id="fig|198214.7.peg.3971"/>
<dbReference type="HOGENOM" id="CLU_166087_2_1_6"/>
<dbReference type="Proteomes" id="UP000001006">
    <property type="component" value="Chromosome"/>
</dbReference>
<dbReference type="Proteomes" id="UP000002673">
    <property type="component" value="Chromosome"/>
</dbReference>
<dbReference type="GO" id="GO:1990228">
    <property type="term" value="C:sulfurtransferase complex"/>
    <property type="evidence" value="ECO:0007669"/>
    <property type="project" value="TreeGrafter"/>
</dbReference>
<dbReference type="GO" id="GO:0002143">
    <property type="term" value="P:tRNA wobble position uridine thiolation"/>
    <property type="evidence" value="ECO:0007669"/>
    <property type="project" value="InterPro"/>
</dbReference>
<dbReference type="FunFam" id="3.40.1260.10:FF:000002">
    <property type="entry name" value="Sulfurtransferase TusB"/>
    <property type="match status" value="1"/>
</dbReference>
<dbReference type="Gene3D" id="3.40.1260.10">
    <property type="entry name" value="DsrEFH-like"/>
    <property type="match status" value="1"/>
</dbReference>
<dbReference type="HAMAP" id="MF_01564">
    <property type="entry name" value="Thiourid_synth_B"/>
    <property type="match status" value="1"/>
</dbReference>
<dbReference type="InterPro" id="IPR027396">
    <property type="entry name" value="DsrEFH-like"/>
</dbReference>
<dbReference type="InterPro" id="IPR023526">
    <property type="entry name" value="Sulphur_relay_TusB"/>
</dbReference>
<dbReference type="InterPro" id="IPR007215">
    <property type="entry name" value="Sulphur_relay_TusB/DsrH"/>
</dbReference>
<dbReference type="NCBIfam" id="NF010035">
    <property type="entry name" value="PRK13510.1"/>
    <property type="match status" value="1"/>
</dbReference>
<dbReference type="NCBIfam" id="TIGR03011">
    <property type="entry name" value="sulf_tusB_dsrH"/>
    <property type="match status" value="1"/>
</dbReference>
<dbReference type="PANTHER" id="PTHR37526">
    <property type="entry name" value="PROTEIN TUSB"/>
    <property type="match status" value="1"/>
</dbReference>
<dbReference type="PANTHER" id="PTHR37526:SF1">
    <property type="entry name" value="PROTEIN TUSB"/>
    <property type="match status" value="1"/>
</dbReference>
<dbReference type="Pfam" id="PF04077">
    <property type="entry name" value="DsrH"/>
    <property type="match status" value="1"/>
</dbReference>
<dbReference type="SUPFAM" id="SSF75169">
    <property type="entry name" value="DsrEFH-like"/>
    <property type="match status" value="1"/>
</dbReference>
<evidence type="ECO:0000255" key="1">
    <source>
        <dbReference type="HAMAP-Rule" id="MF_01564"/>
    </source>
</evidence>
<accession>Q83JC2</accession>
<accession>Q7BYQ8</accession>
<keyword id="KW-0963">Cytoplasm</keyword>
<keyword id="KW-1185">Reference proteome</keyword>
<keyword id="KW-0819">tRNA processing</keyword>
<feature type="chain" id="PRO_0000234522" description="Protein TusB">
    <location>
        <begin position="1"/>
        <end position="95"/>
    </location>
</feature>
<sequence length="95" mass="10718">MLHTLHRSPWLTDFAALLRLLSEGDELLLLQDGVTAAVDGNRYLESLRNAPIKVYALNEDLIARGLTGQILNDIIPIDYTDFVRLTVKHSSQMAW</sequence>